<name>TBX21_HUMAN</name>
<feature type="chain" id="PRO_0000184453" description="T-box transcription factor TBX21">
    <location>
        <begin position="1"/>
        <end position="535"/>
    </location>
</feature>
<feature type="DNA-binding region" description="T-box" evidence="2">
    <location>
        <begin position="141"/>
        <end position="326"/>
    </location>
</feature>
<feature type="region of interest" description="Disordered" evidence="3">
    <location>
        <begin position="1"/>
        <end position="62"/>
    </location>
</feature>
<feature type="region of interest" description="Disordered" evidence="3">
    <location>
        <begin position="83"/>
        <end position="109"/>
    </location>
</feature>
<feature type="region of interest" description="Disordered" evidence="3">
    <location>
        <begin position="449"/>
        <end position="535"/>
    </location>
</feature>
<feature type="compositionally biased region" description="Low complexity" evidence="3">
    <location>
        <begin position="503"/>
        <end position="520"/>
    </location>
</feature>
<feature type="site" description="Essential for its interaction with RUNX1 and its ability to inhibit RUNX1 transcriptional activity and suppress TH17 lineage development" evidence="1">
    <location>
        <position position="305"/>
    </location>
</feature>
<feature type="modified residue" description="Phosphoserine" evidence="1">
    <location>
        <position position="53"/>
    </location>
</feature>
<feature type="modified residue" description="Phosphotyrosine" evidence="1">
    <location>
        <position position="77"/>
    </location>
</feature>
<feature type="modified residue" description="Phosphotyrosine" evidence="1">
    <location>
        <position position="118"/>
    </location>
</feature>
<feature type="modified residue" description="Phosphotyrosine; by ABL1" evidence="1">
    <location>
        <position position="220"/>
    </location>
</feature>
<feature type="modified residue" description="Phosphoserine" evidence="1">
    <location>
        <position position="225"/>
    </location>
</feature>
<feature type="modified residue" description="Phosphotyrosine; by ABL1" evidence="1">
    <location>
        <position position="266"/>
    </location>
</feature>
<feature type="modified residue" description="Phosphothreonine" evidence="1">
    <location>
        <position position="303"/>
    </location>
</feature>
<feature type="modified residue" description="Phosphotyrosine; by ABL1" evidence="1">
    <location>
        <position position="305"/>
    </location>
</feature>
<feature type="modified residue" description="Phosphoserine" evidence="1">
    <location>
        <position position="513"/>
    </location>
</feature>
<feature type="modified residue" description="Phosphotyrosine; by ITK" evidence="1">
    <location>
        <position position="530"/>
    </location>
</feature>
<feature type="cross-link" description="Glycyl lysine isopeptide (Lys-Gly) (interchain with G-Cter in ubiquitin)" evidence="1">
    <location>
        <position position="314"/>
    </location>
</feature>
<feature type="sequence variant" id="VAR_020252" description="In dbSNP:rs2240017." evidence="6">
    <original>H</original>
    <variation>Q</variation>
    <location>
        <position position="33"/>
    </location>
</feature>
<feature type="sequence variant" id="VAR_086466" description="In IMD88; loss of binding to DNA; loss of transcriptional activity shown in IFNG promoter-driven luciferase assay; unable to activate IFNG production." evidence="9">
    <original>EM</original>
    <variation>SL</variation>
    <location>
        <begin position="156"/>
        <end position="157"/>
    </location>
</feature>
<feature type="sequence variant" id="VAR_029275" description="In dbSNP:rs12721471.">
    <original>I</original>
    <variation>V</variation>
    <location>
        <position position="339"/>
    </location>
</feature>
<proteinExistence type="evidence at protein level"/>
<protein>
    <recommendedName>
        <fullName>T-box transcription factor TBX21</fullName>
        <shortName>T-box protein 21</shortName>
    </recommendedName>
    <alternativeName>
        <fullName>T-cell-specific T-box transcription factor T-bet</fullName>
    </alternativeName>
    <alternativeName>
        <fullName>Transcription factor TBLYM</fullName>
    </alternativeName>
</protein>
<reference key="1">
    <citation type="submission" date="1998-09" db="EMBL/GenBank/DDBJ databases">
        <title>Cloning and characterization of a new member of T-box gene family.</title>
        <authorList>
            <person name="Yang S."/>
        </authorList>
    </citation>
    <scope>NUCLEOTIDE SEQUENCE [MRNA]</scope>
</reference>
<reference key="2">
    <citation type="journal article" date="2000" name="Cell">
        <title>A novel transcription factor, T-bet, directs Th1 lineage commitment.</title>
        <authorList>
            <person name="Szabo S.J."/>
            <person name="Kim S.T."/>
            <person name="Costa G.L."/>
            <person name="Zhang X."/>
            <person name="Fathman C.G."/>
            <person name="Glimcher L.H."/>
        </authorList>
    </citation>
    <scope>NUCLEOTIDE SEQUENCE [MRNA]</scope>
    <scope>FUNCTION</scope>
    <scope>TISSUE SPECIFICITY</scope>
</reference>
<reference key="3">
    <citation type="journal article" date="2004" name="Genome Res.">
        <title>The status, quality, and expansion of the NIH full-length cDNA project: the Mammalian Gene Collection (MGC).</title>
        <authorList>
            <consortium name="The MGC Project Team"/>
        </authorList>
    </citation>
    <scope>NUCLEOTIDE SEQUENCE [LARGE SCALE MRNA]</scope>
    <source>
        <tissue>Testis</tissue>
    </source>
</reference>
<reference key="4">
    <citation type="journal article" date="2005" name="Hum. Genet.">
        <title>Functional promoter polymorphism in the TBX21 gene associated with aspirin-induced asthma.</title>
        <authorList>
            <person name="Akahoshi M."/>
            <person name="Obara K."/>
            <person name="Hirota T."/>
            <person name="Matsuda A."/>
            <person name="Hasegawa K."/>
            <person name="Takahashi N."/>
            <person name="Shimizu M."/>
            <person name="Nakashima K."/>
            <person name="Cheng L."/>
            <person name="Doi S."/>
            <person name="Fujiwara H."/>
            <person name="Miyatake A."/>
            <person name="Fujita K."/>
            <person name="Higashi N."/>
            <person name="Taniguchi M."/>
            <person name="Enomoto T."/>
            <person name="Mao X.-Q."/>
            <person name="Nakashima H."/>
            <person name="Adra C.N."/>
            <person name="Nakamura Y."/>
            <person name="Tamari M."/>
            <person name="Shirakawa T."/>
        </authorList>
    </citation>
    <scope>INVOLVEMENT IN ANPAI</scope>
    <scope>VARIANT GLN-33</scope>
</reference>
<reference key="5">
    <citation type="journal article" date="2005" name="Science">
        <title>T helper cell fate specified by kinase-mediated interaction of T-bet with GATA-3.</title>
        <authorList>
            <person name="Hwang E.S."/>
            <person name="Szabo S.J."/>
            <person name="Schwartzberg P.L."/>
            <person name="Glimcher L.H."/>
        </authorList>
    </citation>
    <scope>INTERACTION WITH GATA3</scope>
</reference>
<reference key="6">
    <citation type="journal article" date="2014" name="Biochem. Biophys. Res. Commun.">
        <title>Deubiquitination and stabilization of T-bet by USP10.</title>
        <authorList>
            <person name="Pan L."/>
            <person name="Chen Z."/>
            <person name="Wang L."/>
            <person name="Chen C."/>
            <person name="Li D."/>
            <person name="Wan H."/>
            <person name="Li B."/>
            <person name="Shi G."/>
        </authorList>
    </citation>
    <scope>DEUBIQUITINATION</scope>
    <scope>SUBCELLULAR LOCATION</scope>
    <scope>INTERACTION WITH USP10</scope>
</reference>
<reference key="7">
    <citation type="journal article" date="2016" name="Cell Rep.">
        <title>T-bet activates Th1 genes through mediator and the super elongation complex.</title>
        <authorList>
            <person name="Hertweck A."/>
            <person name="Evans C.M."/>
            <person name="Eskandarpour M."/>
            <person name="Lau J.C."/>
            <person name="Oleinika K."/>
            <person name="Jackson I."/>
            <person name="Kelly A."/>
            <person name="Ambrose J."/>
            <person name="Adamson P."/>
            <person name="Cousins D.J."/>
            <person name="Lavender P."/>
            <person name="Calder V.L."/>
            <person name="Lord G.M."/>
            <person name="Jenner R.G."/>
        </authorList>
    </citation>
    <scope>FUNCTION</scope>
    <scope>INTERACTION WITH CCNT1</scope>
</reference>
<reference key="8">
    <citation type="journal article" date="2020" name="Cell">
        <title>Human T-bet Governs Innate and Innate-like Adaptive IFN-gamma Immunity against Mycobacteria.</title>
        <authorList>
            <person name="Yang R."/>
            <person name="Mele F."/>
            <person name="Worley L."/>
            <person name="Langlais D."/>
            <person name="Rosain J."/>
            <person name="Benhsaien I."/>
            <person name="Elarabi H."/>
            <person name="Croft C.A."/>
            <person name="Doisne J.M."/>
            <person name="Zhang P."/>
            <person name="Weisshaar M."/>
            <person name="Jarrossay D."/>
            <person name="Latorre D."/>
            <person name="Shen Y."/>
            <person name="Han J."/>
            <person name="Ogishi M."/>
            <person name="Gruber C."/>
            <person name="Markle J."/>
            <person name="Al Ali F."/>
            <person name="Rahman M."/>
            <person name="Khan T."/>
            <person name="Seeleuthner Y."/>
            <person name="Kerner G."/>
            <person name="Husquin L.T."/>
            <person name="Maclsaac J.L."/>
            <person name="Jeljeli M."/>
            <person name="Errami A."/>
            <person name="Ailal F."/>
            <person name="Kobor M.S."/>
            <person name="Oleaga-Quintas C."/>
            <person name="Roynard M."/>
            <person name="Bourgey M."/>
            <person name="El Baghdadi J."/>
            <person name="Boisson-Dupuis S."/>
            <person name="Puel A."/>
            <person name="Batteux F."/>
            <person name="Rozenberg F."/>
            <person name="Marr N."/>
            <person name="Pan-Hammarstroem Q."/>
            <person name="Bogunovic D."/>
            <person name="Quintana-Murci L."/>
            <person name="Carroll T."/>
            <person name="Ma C.S."/>
            <person name="Abel L."/>
            <person name="Bousfiha A."/>
            <person name="Di Santo J.P."/>
            <person name="Glimcher L.H."/>
            <person name="Gros P."/>
            <person name="Tangye S.G."/>
            <person name="Sallusto F."/>
            <person name="Bustamante J."/>
            <person name="Casanova J.L."/>
        </authorList>
    </citation>
    <scope>VARIANT IMD88 156-GLU-MET-157 DELINS SER-LEU</scope>
    <scope>CHARACTERIZATION OF VARIANT IMD88 156-GLU-MET-157 DELINS SER-LEU</scope>
    <scope>INVOLVEMENT IN IMD88</scope>
    <scope>FUNCTION</scope>
    <scope>SUBCELLULAR LOCATION</scope>
</reference>
<keyword id="KW-0010">Activator</keyword>
<keyword id="KW-1058">Asthma</keyword>
<keyword id="KW-0225">Disease variant</keyword>
<keyword id="KW-0238">DNA-binding</keyword>
<keyword id="KW-1017">Isopeptide bond</keyword>
<keyword id="KW-0539">Nucleus</keyword>
<keyword id="KW-0597">Phosphoprotein</keyword>
<keyword id="KW-1267">Proteomics identification</keyword>
<keyword id="KW-1185">Reference proteome</keyword>
<keyword id="KW-0678">Repressor</keyword>
<keyword id="KW-0804">Transcription</keyword>
<keyword id="KW-0805">Transcription regulation</keyword>
<keyword id="KW-0832">Ubl conjugation</keyword>
<sequence>MGIVEPGCGDMLTGTEPMPGSDEGRAPGADPQHRYFYPEPGAQDADERRGGGSLGSPYPGGALVPAPPSRFLGAYAYPPRPQAAGFPGAGESFPPPADAEGYQPGEGYAAPDPRAGLYPGPREDYALPAGLEVSGKLRVALNNHLLWSKFNQHQTEMIITKQGRRMFPFLSFTVAGLEPTSHYRMFVDVVLVDQHHWRYQSGKWVQCGKAEGSMPGNRLYVHPDSPNTGAHWMRQEVSFGKLKLTNNKGASNNVTQMIVLQSLHKYQPRLHIVEVNDGEPEAACNASNTHIFTFQETQFIAVTAYQNAEITQLKIDNNPFAKGFRENFESMYTSVDTSIPSPPGPNCQFLGGDHYSPLLPNQYPVPSRFYPDLPGQAKDVVPQAYWLGAPRDHSYEAEFRAVSMKPAFLPSAPGPTMSYYRGQEVLAPGAGWPVAPQYPPKMGPASWFRPMRTLPMEPGPGGSEGRGPEDQGPPLVWTEIAPIRPESSDSGLGEGDSKRRRVSPYPSSGDSSSPAGAPSPFDKEAEGQFYNYFPN</sequence>
<evidence type="ECO:0000250" key="1">
    <source>
        <dbReference type="UniProtKB" id="Q9JKD8"/>
    </source>
</evidence>
<evidence type="ECO:0000255" key="2">
    <source>
        <dbReference type="PROSITE-ProRule" id="PRU00201"/>
    </source>
</evidence>
<evidence type="ECO:0000256" key="3">
    <source>
        <dbReference type="SAM" id="MobiDB-lite"/>
    </source>
</evidence>
<evidence type="ECO:0000269" key="4">
    <source>
    </source>
</evidence>
<evidence type="ECO:0000269" key="5">
    <source>
    </source>
</evidence>
<evidence type="ECO:0000269" key="6">
    <source>
    </source>
</evidence>
<evidence type="ECO:0000269" key="7">
    <source>
    </source>
</evidence>
<evidence type="ECO:0000269" key="8">
    <source>
    </source>
</evidence>
<evidence type="ECO:0000269" key="9">
    <source>
    </source>
</evidence>
<organism>
    <name type="scientific">Homo sapiens</name>
    <name type="common">Human</name>
    <dbReference type="NCBI Taxonomy" id="9606"/>
    <lineage>
        <taxon>Eukaryota</taxon>
        <taxon>Metazoa</taxon>
        <taxon>Chordata</taxon>
        <taxon>Craniata</taxon>
        <taxon>Vertebrata</taxon>
        <taxon>Euteleostomi</taxon>
        <taxon>Mammalia</taxon>
        <taxon>Eutheria</taxon>
        <taxon>Euarchontoglires</taxon>
        <taxon>Primates</taxon>
        <taxon>Haplorrhini</taxon>
        <taxon>Catarrhini</taxon>
        <taxon>Hominidae</taxon>
        <taxon>Homo</taxon>
    </lineage>
</organism>
<comment type="function">
    <text evidence="1 4 8 9">Lineage-defining transcription factor which initiates Th1 lineage development from naive Th precursor cells both by activating Th1 genetic programs and by repressing the opposing Th2 and Th17 genetic programs (PubMed:10761931). Activates transcription of a set of genes important for Th1 cell function, including those encoding IFN-gamma and the chemokine receptor CXCR3. Induces permissive chromatin accessibilty and CpG methylation in IFNG (PubMed:33296702). Activates IFNG and CXCR3 genes in part by recruiting chromatin remodeling complexes including KDM6B, a SMARCA4-containing SWI/SNF-complex, and an H3K4me2-methyltransferase complex to their promoters and all of these complexes serve to establish a more permissive chromatin state conducive with transcriptional activation (By similarity). Can activate Th1 genes also via recruitment of Mediator complex and P-TEFb (composed of CDK9 and CCNT1/cyclin-T1) in the form of the super elongation complex (SEC) to super-enhancers and associated genes in activated Th1 cells (PubMed:27292648). Inhibits the Th17 cell lineage commitment by blocking RUNX1-mediated transactivation of Th17 cell-specific transcriptinal regulator RORC. Inhibits the Th2 cell lineage commitment by suppressing the production of Th2 cytokines, such as IL-4, IL-5, and IL- 13, via repression of transcriptional regulators GATA3 and NFATC2. Protects Th1 cells from amplifying aberrant type-I IFN response in an IFN-gamma abundant microenvironment by acting as a repressor of type-I IFN transcription factors and type-I IFN-stimulated genes. Acts as a regulator of antiviral B-cell responses; controls chronic viral infection by promoting the antiviral antibody IgG2a isotype switching and via regulation of a broad antiviral gene expression program (By similarity). Required for the correct development of natural killer (NK) and mucosal-associated invariant T (MAIT) cells (PubMed:33296702).</text>
</comment>
<comment type="subunit">
    <text evidence="1 5 7 8">Interacts with RUNX1, RUNX3, ITK, ABL1, RELA, CDK9 and KDM6B. The phosphorylated form (at Thr-303) interacts with NFATC2. Interacts with SMARCA4 in a KDM6B-dependent manner (By similarity). Interacts with CCTN1 (PubMed:27292648). Interacts with USP10 (PubMed:24845384). The phosphorylated form (at Tyr-530) interacts with GATA3 (PubMed:15662016).</text>
</comment>
<comment type="interaction">
    <interactant intactId="EBI-3922312">
        <id>Q9UL17</id>
    </interactant>
    <interactant intactId="EBI-81215">
        <id>Q92793</id>
        <label>CREBBP</label>
    </interactant>
    <organismsDiffer>false</organismsDiffer>
    <experiments>4</experiments>
</comment>
<comment type="interaction">
    <interactant intactId="EBI-3922312">
        <id>Q9UL17</id>
    </interactant>
    <interactant intactId="EBI-447295">
        <id>Q09472</id>
        <label>EP300</label>
    </interactant>
    <organismsDiffer>false</organismsDiffer>
    <experiments>5</experiments>
</comment>
<comment type="interaction">
    <interactant intactId="EBI-3922312">
        <id>Q9UL17</id>
    </interactant>
    <interactant intactId="EBI-6664760">
        <id>P23771</id>
        <label>GATA3</label>
    </interactant>
    <organismsDiffer>false</organismsDiffer>
    <experiments>6</experiments>
</comment>
<comment type="interaction">
    <interactant intactId="EBI-3922312">
        <id>Q9UL17</id>
    </interactant>
    <interactant intactId="EBI-298336">
        <id>P08047</id>
        <label>SP1</label>
    </interactant>
    <organismsDiffer>false</organismsDiffer>
    <experiments>4</experiments>
</comment>
<comment type="subcellular location">
    <subcellularLocation>
        <location evidence="7 9">Nucleus</location>
    </subcellularLocation>
</comment>
<comment type="tissue specificity">
    <text evidence="4">T-cell specific.</text>
</comment>
<comment type="PTM">
    <text evidence="1">Phosphorylations at Ser-53, Tyr-77, Ser-225 and Ser-513 are regulated by mTORC1. Phosphorylation at Tyr-530 is essential for its interaction GATA3. Phosphorylation at Tyr-220, Tyr-266 and Tyr-305 enhances its transcriptional activator activity. Phosphorylation at Thr-303 is required for its interaction with NFATC2.</text>
</comment>
<comment type="PTM">
    <text evidence="1 7">Ubiquitinated at Lys-314, leading to its degradation by the proteasome. Ubiquitination is essential for controlling protein stability, binding to the T-box-binding element of the IFN-gamma promoter, and for interaction with NFATC2 through induction of phosphorylation at Thr-303 (By similarity). Deubiquitinated by USP10 leading to its stabilization (PubMed:24845384).</text>
</comment>
<comment type="disease" evidence="6">
    <disease id="DI-02739">
        <name>Asthma, with nasal polyps and aspirin intolerance</name>
        <acronym>ANPAI</acronym>
        <description>A condition consisting of asthma, aspirin sensitivity and nasal polyposis. Nasal polyposis is due to chronic inflammation of the paranasal sinus mucosa, leading to protrusion of edematous polyps into the nasal cavities.</description>
        <dbReference type="MIM" id="208550"/>
    </disease>
    <text>Disease susceptibility is associated with variants affecting the gene represented in this entry.</text>
</comment>
<comment type="disease" evidence="9">
    <disease id="DI-06274">
        <name>Immunodeficiency 88</name>
        <acronym>IMD88</acronym>
        <description>An autosomal recessive disorder characterized by the development of disseminated mycobacterial disease following vaccination with BCG. Clinical features included fever, lymphadenopathy, and cutaneous eruption.</description>
        <dbReference type="MIM" id="619630"/>
    </disease>
    <text>The disease is caused by variants affecting the gene represented in this entry.</text>
</comment>
<accession>Q9UL17</accession>
<gene>
    <name type="primary">TBX21</name>
    <name type="synonym">TBET</name>
    <name type="synonym">TBLYM</name>
</gene>
<dbReference type="EMBL" id="AF093098">
    <property type="protein sequence ID" value="AAF00055.1"/>
    <property type="molecule type" value="mRNA"/>
</dbReference>
<dbReference type="EMBL" id="AF241243">
    <property type="protein sequence ID" value="AAF61243.1"/>
    <property type="molecule type" value="mRNA"/>
</dbReference>
<dbReference type="EMBL" id="BC039739">
    <property type="protein sequence ID" value="AAH39739.1"/>
    <property type="molecule type" value="mRNA"/>
</dbReference>
<dbReference type="CCDS" id="CCDS11514.1"/>
<dbReference type="RefSeq" id="NP_037483.1">
    <property type="nucleotide sequence ID" value="NM_013351.2"/>
</dbReference>
<dbReference type="SMR" id="Q9UL17"/>
<dbReference type="BioGRID" id="119027">
    <property type="interactions" value="10"/>
</dbReference>
<dbReference type="DIP" id="DIP-61303N"/>
<dbReference type="FunCoup" id="Q9UL17">
    <property type="interactions" value="612"/>
</dbReference>
<dbReference type="IntAct" id="Q9UL17">
    <property type="interactions" value="7"/>
</dbReference>
<dbReference type="STRING" id="9606.ENSP00000177694"/>
<dbReference type="GlyGen" id="Q9UL17">
    <property type="glycosylation" value="1 site"/>
</dbReference>
<dbReference type="iPTMnet" id="Q9UL17"/>
<dbReference type="PhosphoSitePlus" id="Q9UL17"/>
<dbReference type="BioMuta" id="TBX21"/>
<dbReference type="DMDM" id="12230772"/>
<dbReference type="jPOST" id="Q9UL17"/>
<dbReference type="MassIVE" id="Q9UL17"/>
<dbReference type="PaxDb" id="9606-ENSP00000177694"/>
<dbReference type="PeptideAtlas" id="Q9UL17"/>
<dbReference type="ProteomicsDB" id="84930"/>
<dbReference type="Antibodypedia" id="4021">
    <property type="antibodies" value="702 antibodies from 44 providers"/>
</dbReference>
<dbReference type="DNASU" id="30009"/>
<dbReference type="Ensembl" id="ENST00000177694.2">
    <property type="protein sequence ID" value="ENSP00000177694.1"/>
    <property type="gene ID" value="ENSG00000073861.3"/>
</dbReference>
<dbReference type="GeneID" id="30009"/>
<dbReference type="KEGG" id="hsa:30009"/>
<dbReference type="MANE-Select" id="ENST00000177694.2">
    <property type="protein sequence ID" value="ENSP00000177694.1"/>
    <property type="RefSeq nucleotide sequence ID" value="NM_013351.2"/>
    <property type="RefSeq protein sequence ID" value="NP_037483.1"/>
</dbReference>
<dbReference type="UCSC" id="uc002ilv.1">
    <property type="organism name" value="human"/>
</dbReference>
<dbReference type="AGR" id="HGNC:11599"/>
<dbReference type="CTD" id="30009"/>
<dbReference type="DisGeNET" id="30009"/>
<dbReference type="GeneCards" id="TBX21"/>
<dbReference type="HGNC" id="HGNC:11599">
    <property type="gene designation" value="TBX21"/>
</dbReference>
<dbReference type="HPA" id="ENSG00000073861">
    <property type="expression patterns" value="Group enriched (bone marrow, lung, lymphoid tissue)"/>
</dbReference>
<dbReference type="MalaCards" id="TBX21"/>
<dbReference type="MIM" id="208550">
    <property type="type" value="phenotype"/>
</dbReference>
<dbReference type="MIM" id="604895">
    <property type="type" value="gene"/>
</dbReference>
<dbReference type="MIM" id="619630">
    <property type="type" value="phenotype"/>
</dbReference>
<dbReference type="neXtProt" id="NX_Q9UL17"/>
<dbReference type="OpenTargets" id="ENSG00000073861"/>
<dbReference type="PharmGKB" id="PA36362"/>
<dbReference type="VEuPathDB" id="HostDB:ENSG00000073861"/>
<dbReference type="eggNOG" id="KOG3585">
    <property type="taxonomic scope" value="Eukaryota"/>
</dbReference>
<dbReference type="GeneTree" id="ENSGT00940000160397"/>
<dbReference type="HOGENOM" id="CLU_014430_8_2_1"/>
<dbReference type="InParanoid" id="Q9UL17"/>
<dbReference type="OMA" id="AGWPMAP"/>
<dbReference type="OrthoDB" id="7442607at2759"/>
<dbReference type="PAN-GO" id="Q9UL17">
    <property type="GO annotations" value="5 GO annotations based on evolutionary models"/>
</dbReference>
<dbReference type="PhylomeDB" id="Q9UL17"/>
<dbReference type="TreeFam" id="TF106341"/>
<dbReference type="PathwayCommons" id="Q9UL17"/>
<dbReference type="SignaLink" id="Q9UL17"/>
<dbReference type="SIGNOR" id="Q9UL17"/>
<dbReference type="BioGRID-ORCS" id="30009">
    <property type="hits" value="41 hits in 1172 CRISPR screens"/>
</dbReference>
<dbReference type="GeneWiki" id="TBX21"/>
<dbReference type="GenomeRNAi" id="30009"/>
<dbReference type="Pharos" id="Q9UL17">
    <property type="development level" value="Tbio"/>
</dbReference>
<dbReference type="PRO" id="PR:Q9UL17"/>
<dbReference type="Proteomes" id="UP000005640">
    <property type="component" value="Chromosome 17"/>
</dbReference>
<dbReference type="RNAct" id="Q9UL17">
    <property type="molecule type" value="protein"/>
</dbReference>
<dbReference type="Bgee" id="ENSG00000073861">
    <property type="expression patterns" value="Expressed in granulocyte and 111 other cell types or tissues"/>
</dbReference>
<dbReference type="GO" id="GO:0000785">
    <property type="term" value="C:chromatin"/>
    <property type="evidence" value="ECO:0000318"/>
    <property type="project" value="GO_Central"/>
</dbReference>
<dbReference type="GO" id="GO:0043025">
    <property type="term" value="C:neuronal cell body"/>
    <property type="evidence" value="ECO:0007669"/>
    <property type="project" value="Ensembl"/>
</dbReference>
<dbReference type="GO" id="GO:0005634">
    <property type="term" value="C:nucleus"/>
    <property type="evidence" value="ECO:0000250"/>
    <property type="project" value="UniProtKB"/>
</dbReference>
<dbReference type="GO" id="GO:0001228">
    <property type="term" value="F:DNA-binding transcription activator activity, RNA polymerase II-specific"/>
    <property type="evidence" value="ECO:0007669"/>
    <property type="project" value="Ensembl"/>
</dbReference>
<dbReference type="GO" id="GO:0000981">
    <property type="term" value="F:DNA-binding transcription factor activity, RNA polymerase II-specific"/>
    <property type="evidence" value="ECO:0000318"/>
    <property type="project" value="GO_Central"/>
</dbReference>
<dbReference type="GO" id="GO:0001227">
    <property type="term" value="F:DNA-binding transcription repressor activity, RNA polymerase II-specific"/>
    <property type="evidence" value="ECO:0000314"/>
    <property type="project" value="NTNU_SB"/>
</dbReference>
<dbReference type="GO" id="GO:0000978">
    <property type="term" value="F:RNA polymerase II cis-regulatory region sequence-specific DNA binding"/>
    <property type="evidence" value="ECO:0000318"/>
    <property type="project" value="GO_Central"/>
</dbReference>
<dbReference type="GO" id="GO:0043565">
    <property type="term" value="F:sequence-specific DNA binding"/>
    <property type="evidence" value="ECO:0000314"/>
    <property type="project" value="NTNU_SB"/>
</dbReference>
<dbReference type="GO" id="GO:1990837">
    <property type="term" value="F:sequence-specific double-stranded DNA binding"/>
    <property type="evidence" value="ECO:0000314"/>
    <property type="project" value="ARUK-UCL"/>
</dbReference>
<dbReference type="GO" id="GO:0000976">
    <property type="term" value="F:transcription cis-regulatory region binding"/>
    <property type="evidence" value="ECO:0000314"/>
    <property type="project" value="UniProtKB"/>
</dbReference>
<dbReference type="GO" id="GO:0001708">
    <property type="term" value="P:cell fate specification"/>
    <property type="evidence" value="ECO:0000318"/>
    <property type="project" value="GO_Central"/>
</dbReference>
<dbReference type="GO" id="GO:0072676">
    <property type="term" value="P:lymphocyte migration"/>
    <property type="evidence" value="ECO:0000314"/>
    <property type="project" value="UniProtKB"/>
</dbReference>
<dbReference type="GO" id="GO:0045892">
    <property type="term" value="P:negative regulation of DNA-templated transcription"/>
    <property type="evidence" value="ECO:0000250"/>
    <property type="project" value="UniProtKB"/>
</dbReference>
<dbReference type="GO" id="GO:0032703">
    <property type="term" value="P:negative regulation of interleukin-2 production"/>
    <property type="evidence" value="ECO:0000250"/>
    <property type="project" value="UniProtKB"/>
</dbReference>
<dbReference type="GO" id="GO:2000320">
    <property type="term" value="P:negative regulation of T-helper 17 cell differentiation"/>
    <property type="evidence" value="ECO:0000250"/>
    <property type="project" value="UniProtKB"/>
</dbReference>
<dbReference type="GO" id="GO:2000329">
    <property type="term" value="P:negative regulation of T-helper 17 cell lineage commitment"/>
    <property type="evidence" value="ECO:0000250"/>
    <property type="project" value="UniProtKB"/>
</dbReference>
<dbReference type="GO" id="GO:2000552">
    <property type="term" value="P:negative regulation of T-helper 2 cell cytokine production"/>
    <property type="evidence" value="ECO:0000250"/>
    <property type="project" value="UniProtKB"/>
</dbReference>
<dbReference type="GO" id="GO:0000122">
    <property type="term" value="P:negative regulation of transcription by RNA polymerase II"/>
    <property type="evidence" value="ECO:0000314"/>
    <property type="project" value="NTNU_SB"/>
</dbReference>
<dbReference type="GO" id="GO:0045893">
    <property type="term" value="P:positive regulation of DNA-templated transcription"/>
    <property type="evidence" value="ECO:0000314"/>
    <property type="project" value="UniProtKB"/>
</dbReference>
<dbReference type="GO" id="GO:0048304">
    <property type="term" value="P:positive regulation of isotype switching to IgG isotypes"/>
    <property type="evidence" value="ECO:0007669"/>
    <property type="project" value="Ensembl"/>
</dbReference>
<dbReference type="GO" id="GO:2000556">
    <property type="term" value="P:positive regulation of T-helper 1 cell cytokine production"/>
    <property type="evidence" value="ECO:0000250"/>
    <property type="project" value="UniProtKB"/>
</dbReference>
<dbReference type="GO" id="GO:0045944">
    <property type="term" value="P:positive regulation of transcription by RNA polymerase II"/>
    <property type="evidence" value="ECO:0000250"/>
    <property type="project" value="UniProtKB"/>
</dbReference>
<dbReference type="GO" id="GO:0043161">
    <property type="term" value="P:proteasome-mediated ubiquitin-dependent protein catabolic process"/>
    <property type="evidence" value="ECO:0000250"/>
    <property type="project" value="UniProtKB"/>
</dbReference>
<dbReference type="GO" id="GO:0045580">
    <property type="term" value="P:regulation of T cell differentiation"/>
    <property type="evidence" value="ECO:0000250"/>
    <property type="project" value="UniProtKB"/>
</dbReference>
<dbReference type="GO" id="GO:0006357">
    <property type="term" value="P:regulation of transcription by RNA polymerase II"/>
    <property type="evidence" value="ECO:0000318"/>
    <property type="project" value="GO_Central"/>
</dbReference>
<dbReference type="GO" id="GO:0009615">
    <property type="term" value="P:response to virus"/>
    <property type="evidence" value="ECO:0000270"/>
    <property type="project" value="UniProtKB"/>
</dbReference>
<dbReference type="GO" id="GO:0002296">
    <property type="term" value="P:T-helper 1 cell lineage commitment"/>
    <property type="evidence" value="ECO:0000250"/>
    <property type="project" value="UniProtKB"/>
</dbReference>
<dbReference type="CDD" id="cd20203">
    <property type="entry name" value="T-box_TBX21"/>
    <property type="match status" value="1"/>
</dbReference>
<dbReference type="FunFam" id="2.60.40.820:FF:000011">
    <property type="entry name" value="T-box transcription factor TBX21"/>
    <property type="match status" value="1"/>
</dbReference>
<dbReference type="Gene3D" id="2.60.40.820">
    <property type="entry name" value="Transcription factor, T-box"/>
    <property type="match status" value="1"/>
</dbReference>
<dbReference type="InterPro" id="IPR008967">
    <property type="entry name" value="p53-like_TF_DNA-bd_sf"/>
</dbReference>
<dbReference type="InterPro" id="IPR046360">
    <property type="entry name" value="T-box_DNA-bd"/>
</dbReference>
<dbReference type="InterPro" id="IPR036960">
    <property type="entry name" value="T-box_sf"/>
</dbReference>
<dbReference type="InterPro" id="IPR001699">
    <property type="entry name" value="TF_T-box"/>
</dbReference>
<dbReference type="InterPro" id="IPR018186">
    <property type="entry name" value="TF_T-box_CS"/>
</dbReference>
<dbReference type="PANTHER" id="PTHR11267">
    <property type="entry name" value="T-BOX PROTEIN-RELATED"/>
    <property type="match status" value="1"/>
</dbReference>
<dbReference type="PANTHER" id="PTHR11267:SF125">
    <property type="entry name" value="T-BOX TRANSCRIPTION FACTOR TBX21"/>
    <property type="match status" value="1"/>
</dbReference>
<dbReference type="Pfam" id="PF00907">
    <property type="entry name" value="T-box"/>
    <property type="match status" value="1"/>
</dbReference>
<dbReference type="PRINTS" id="PR00937">
    <property type="entry name" value="TBOX"/>
</dbReference>
<dbReference type="SMART" id="SM00425">
    <property type="entry name" value="TBOX"/>
    <property type="match status" value="1"/>
</dbReference>
<dbReference type="SUPFAM" id="SSF49417">
    <property type="entry name" value="p53-like transcription factors"/>
    <property type="match status" value="1"/>
</dbReference>
<dbReference type="PROSITE" id="PS01283">
    <property type="entry name" value="TBOX_1"/>
    <property type="match status" value="1"/>
</dbReference>
<dbReference type="PROSITE" id="PS01264">
    <property type="entry name" value="TBOX_2"/>
    <property type="match status" value="1"/>
</dbReference>
<dbReference type="PROSITE" id="PS50252">
    <property type="entry name" value="TBOX_3"/>
    <property type="match status" value="1"/>
</dbReference>